<proteinExistence type="inferred from homology"/>
<protein>
    <recommendedName>
        <fullName evidence="1">Large ribosomal subunit protein bL32</fullName>
    </recommendedName>
    <alternativeName>
        <fullName evidence="3">50S ribosomal protein L32</fullName>
    </alternativeName>
</protein>
<organism>
    <name type="scientific">Variovorax paradoxus (strain S110)</name>
    <dbReference type="NCBI Taxonomy" id="543728"/>
    <lineage>
        <taxon>Bacteria</taxon>
        <taxon>Pseudomonadati</taxon>
        <taxon>Pseudomonadota</taxon>
        <taxon>Betaproteobacteria</taxon>
        <taxon>Burkholderiales</taxon>
        <taxon>Comamonadaceae</taxon>
        <taxon>Variovorax</taxon>
    </lineage>
</organism>
<keyword id="KW-0687">Ribonucleoprotein</keyword>
<keyword id="KW-0689">Ribosomal protein</keyword>
<gene>
    <name evidence="1" type="primary">rpmF</name>
    <name type="ordered locus">Vapar_1387</name>
</gene>
<dbReference type="EMBL" id="CP001635">
    <property type="protein sequence ID" value="ACS18038.1"/>
    <property type="molecule type" value="Genomic_DNA"/>
</dbReference>
<dbReference type="SMR" id="C5CSE0"/>
<dbReference type="STRING" id="543728.Vapar_1387"/>
<dbReference type="KEGG" id="vap:Vapar_1387"/>
<dbReference type="eggNOG" id="COG0333">
    <property type="taxonomic scope" value="Bacteria"/>
</dbReference>
<dbReference type="HOGENOM" id="CLU_129084_2_1_4"/>
<dbReference type="OrthoDB" id="9801927at2"/>
<dbReference type="GO" id="GO:0015934">
    <property type="term" value="C:large ribosomal subunit"/>
    <property type="evidence" value="ECO:0007669"/>
    <property type="project" value="InterPro"/>
</dbReference>
<dbReference type="GO" id="GO:0003735">
    <property type="term" value="F:structural constituent of ribosome"/>
    <property type="evidence" value="ECO:0007669"/>
    <property type="project" value="InterPro"/>
</dbReference>
<dbReference type="GO" id="GO:0006412">
    <property type="term" value="P:translation"/>
    <property type="evidence" value="ECO:0007669"/>
    <property type="project" value="UniProtKB-UniRule"/>
</dbReference>
<dbReference type="HAMAP" id="MF_00340">
    <property type="entry name" value="Ribosomal_bL32"/>
    <property type="match status" value="1"/>
</dbReference>
<dbReference type="InterPro" id="IPR002677">
    <property type="entry name" value="Ribosomal_bL32"/>
</dbReference>
<dbReference type="InterPro" id="IPR044957">
    <property type="entry name" value="Ribosomal_bL32_bact"/>
</dbReference>
<dbReference type="InterPro" id="IPR011332">
    <property type="entry name" value="Ribosomal_zn-bd"/>
</dbReference>
<dbReference type="NCBIfam" id="TIGR01031">
    <property type="entry name" value="rpmF_bact"/>
    <property type="match status" value="1"/>
</dbReference>
<dbReference type="PANTHER" id="PTHR35534">
    <property type="entry name" value="50S RIBOSOMAL PROTEIN L32"/>
    <property type="match status" value="1"/>
</dbReference>
<dbReference type="PANTHER" id="PTHR35534:SF1">
    <property type="entry name" value="LARGE RIBOSOMAL SUBUNIT PROTEIN BL32"/>
    <property type="match status" value="1"/>
</dbReference>
<dbReference type="Pfam" id="PF01783">
    <property type="entry name" value="Ribosomal_L32p"/>
    <property type="match status" value="1"/>
</dbReference>
<dbReference type="SUPFAM" id="SSF57829">
    <property type="entry name" value="Zn-binding ribosomal proteins"/>
    <property type="match status" value="1"/>
</dbReference>
<reference key="1">
    <citation type="journal article" date="2011" name="J. Bacteriol.">
        <title>Complete genome sequence of the metabolically versatile plant growth-promoting endophyte, Variovorax paradoxus S110.</title>
        <authorList>
            <person name="Han J.I."/>
            <person name="Choi H.K."/>
            <person name="Lee S.W."/>
            <person name="Orwin P.M."/>
            <person name="Kim J."/>
            <person name="Laroe S.L."/>
            <person name="Kim T.G."/>
            <person name="O'Neil J."/>
            <person name="Leadbetter J.R."/>
            <person name="Lee S.Y."/>
            <person name="Hur C.G."/>
            <person name="Spain J.C."/>
            <person name="Ovchinnikova G."/>
            <person name="Goodwin L."/>
            <person name="Han C."/>
        </authorList>
    </citation>
    <scope>NUCLEOTIDE SEQUENCE [LARGE SCALE GENOMIC DNA]</scope>
    <source>
        <strain>S110</strain>
    </source>
</reference>
<accession>C5CSE0</accession>
<comment type="similarity">
    <text evidence="1">Belongs to the bacterial ribosomal protein bL32 family.</text>
</comment>
<evidence type="ECO:0000255" key="1">
    <source>
        <dbReference type="HAMAP-Rule" id="MF_00340"/>
    </source>
</evidence>
<evidence type="ECO:0000256" key="2">
    <source>
        <dbReference type="SAM" id="MobiDB-lite"/>
    </source>
</evidence>
<evidence type="ECO:0000305" key="3"/>
<name>RL32_VARPS</name>
<feature type="chain" id="PRO_1000205275" description="Large ribosomal subunit protein bL32">
    <location>
        <begin position="1"/>
        <end position="60"/>
    </location>
</feature>
<feature type="region of interest" description="Disordered" evidence="2">
    <location>
        <begin position="1"/>
        <end position="22"/>
    </location>
</feature>
<feature type="region of interest" description="Disordered" evidence="2">
    <location>
        <begin position="34"/>
        <end position="60"/>
    </location>
</feature>
<feature type="compositionally biased region" description="Basic residues" evidence="2">
    <location>
        <begin position="9"/>
        <end position="19"/>
    </location>
</feature>
<sequence length="60" mass="6685">MAVQQNKKSPSKRGMHRSHNALVVPGIAVEPTTGETHLRHHISPNGFYRGRQVLKNKSEA</sequence>